<keyword id="KW-0119">Carbohydrate metabolism</keyword>
<keyword id="KW-0238">DNA-binding</keyword>
<keyword id="KW-0678">Repressor</keyword>
<keyword id="KW-0804">Transcription</keyword>
<keyword id="KW-0805">Transcription regulation</keyword>
<gene>
    <name evidence="1" type="primary">murR</name>
    <name type="ordered locus">ECSP_3374</name>
</gene>
<feature type="chain" id="PRO_0000387764" description="HTH-type transcriptional regulator MurR">
    <location>
        <begin position="1"/>
        <end position="285"/>
    </location>
</feature>
<feature type="domain" description="HTH rpiR-type" evidence="1">
    <location>
        <begin position="1"/>
        <end position="77"/>
    </location>
</feature>
<feature type="domain" description="SIS" evidence="1">
    <location>
        <begin position="128"/>
        <end position="268"/>
    </location>
</feature>
<feature type="DNA-binding region" description="H-T-H motif" evidence="1">
    <location>
        <begin position="37"/>
        <end position="56"/>
    </location>
</feature>
<evidence type="ECO:0000255" key="1">
    <source>
        <dbReference type="HAMAP-Rule" id="MF_02108"/>
    </source>
</evidence>
<proteinExistence type="inferred from homology"/>
<name>MURR_ECO5T</name>
<comment type="function">
    <text evidence="1">Represses the expression of the murPQ operon involved in the uptake and degradation of N-acetylmuramic acid (MurNAc). Binds to two adjacent inverted repeats within the operator region. MurNAc 6-phosphate, the substrate of MurQ, is the specific inducer that weakens binding of MurR to the operator.</text>
</comment>
<comment type="pathway">
    <text>Amino-sugar metabolism; N-acetylmuramate degradation [regulation].</text>
</comment>
<comment type="subunit">
    <text evidence="1">Homotetramer.</text>
</comment>
<dbReference type="EMBL" id="CP001368">
    <property type="protein sequence ID" value="ACT73141.1"/>
    <property type="molecule type" value="Genomic_DNA"/>
</dbReference>
<dbReference type="RefSeq" id="WP_000966443.1">
    <property type="nucleotide sequence ID" value="NC_013008.1"/>
</dbReference>
<dbReference type="SMR" id="C6UQ16"/>
<dbReference type="KEGG" id="etw:ECSP_3374"/>
<dbReference type="HOGENOM" id="CLU_055769_0_2_6"/>
<dbReference type="UniPathway" id="UPA00342"/>
<dbReference type="GO" id="GO:0097367">
    <property type="term" value="F:carbohydrate derivative binding"/>
    <property type="evidence" value="ECO:0007669"/>
    <property type="project" value="InterPro"/>
</dbReference>
<dbReference type="GO" id="GO:0003677">
    <property type="term" value="F:DNA binding"/>
    <property type="evidence" value="ECO:0007669"/>
    <property type="project" value="UniProtKB-KW"/>
</dbReference>
<dbReference type="GO" id="GO:0003700">
    <property type="term" value="F:DNA-binding transcription factor activity"/>
    <property type="evidence" value="ECO:0007669"/>
    <property type="project" value="UniProtKB-UniRule"/>
</dbReference>
<dbReference type="GO" id="GO:1901135">
    <property type="term" value="P:carbohydrate derivative metabolic process"/>
    <property type="evidence" value="ECO:0007669"/>
    <property type="project" value="InterPro"/>
</dbReference>
<dbReference type="GO" id="GO:0097173">
    <property type="term" value="P:N-acetylmuramic acid catabolic process"/>
    <property type="evidence" value="ECO:0007669"/>
    <property type="project" value="UniProtKB-UniPathway"/>
</dbReference>
<dbReference type="GO" id="GO:0045892">
    <property type="term" value="P:negative regulation of DNA-templated transcription"/>
    <property type="evidence" value="ECO:0007669"/>
    <property type="project" value="UniProtKB-UniRule"/>
</dbReference>
<dbReference type="GO" id="GO:0043470">
    <property type="term" value="P:regulation of carbohydrate catabolic process"/>
    <property type="evidence" value="ECO:0007669"/>
    <property type="project" value="UniProtKB-UniRule"/>
</dbReference>
<dbReference type="CDD" id="cd05013">
    <property type="entry name" value="SIS_RpiR"/>
    <property type="match status" value="1"/>
</dbReference>
<dbReference type="FunFam" id="3.40.50.10490:FF:000028">
    <property type="entry name" value="HTH-type transcriptional regulator MurR"/>
    <property type="match status" value="1"/>
</dbReference>
<dbReference type="Gene3D" id="3.40.50.10490">
    <property type="entry name" value="Glucose-6-phosphate isomerase like protein, domain 1"/>
    <property type="match status" value="1"/>
</dbReference>
<dbReference type="Gene3D" id="1.10.10.10">
    <property type="entry name" value="Winged helix-like DNA-binding domain superfamily/Winged helix DNA-binding domain"/>
    <property type="match status" value="1"/>
</dbReference>
<dbReference type="HAMAP" id="MF_02108">
    <property type="entry name" value="HTH_type_MurR"/>
    <property type="match status" value="1"/>
</dbReference>
<dbReference type="InterPro" id="IPR009057">
    <property type="entry name" value="Homeodomain-like_sf"/>
</dbReference>
<dbReference type="InterPro" id="IPR000281">
    <property type="entry name" value="HTH_RpiR"/>
</dbReference>
<dbReference type="InterPro" id="IPR047640">
    <property type="entry name" value="RpiR-like"/>
</dbReference>
<dbReference type="InterPro" id="IPR035472">
    <property type="entry name" value="RpiR-like_SIS"/>
</dbReference>
<dbReference type="InterPro" id="IPR001347">
    <property type="entry name" value="SIS_dom"/>
</dbReference>
<dbReference type="InterPro" id="IPR046348">
    <property type="entry name" value="SIS_dom_sf"/>
</dbReference>
<dbReference type="InterPro" id="IPR022821">
    <property type="entry name" value="Tscrpt_reg_HTH_MurR"/>
</dbReference>
<dbReference type="InterPro" id="IPR036388">
    <property type="entry name" value="WH-like_DNA-bd_sf"/>
</dbReference>
<dbReference type="NCBIfam" id="NF012026">
    <property type="entry name" value="PRK15482.1"/>
    <property type="match status" value="1"/>
</dbReference>
<dbReference type="PANTHER" id="PTHR30514">
    <property type="entry name" value="GLUCOKINASE"/>
    <property type="match status" value="1"/>
</dbReference>
<dbReference type="PANTHER" id="PTHR30514:SF17">
    <property type="entry name" value="HTH-TYPE TRANSCRIPTIONAL REGULATOR MURR"/>
    <property type="match status" value="1"/>
</dbReference>
<dbReference type="Pfam" id="PF01418">
    <property type="entry name" value="HTH_6"/>
    <property type="match status" value="1"/>
</dbReference>
<dbReference type="Pfam" id="PF01380">
    <property type="entry name" value="SIS"/>
    <property type="match status" value="1"/>
</dbReference>
<dbReference type="SUPFAM" id="SSF46689">
    <property type="entry name" value="Homeodomain-like"/>
    <property type="match status" value="1"/>
</dbReference>
<dbReference type="SUPFAM" id="SSF53697">
    <property type="entry name" value="SIS domain"/>
    <property type="match status" value="1"/>
</dbReference>
<dbReference type="PROSITE" id="PS51071">
    <property type="entry name" value="HTH_RPIR"/>
    <property type="match status" value="1"/>
</dbReference>
<dbReference type="PROSITE" id="PS51464">
    <property type="entry name" value="SIS"/>
    <property type="match status" value="1"/>
</dbReference>
<accession>C6UQ16</accession>
<protein>
    <recommendedName>
        <fullName evidence="1">HTH-type transcriptional regulator MurR</fullName>
    </recommendedName>
    <alternativeName>
        <fullName evidence="1">MurPQ operon repressor</fullName>
    </alternativeName>
</protein>
<organism>
    <name type="scientific">Escherichia coli O157:H7 (strain TW14359 / EHEC)</name>
    <dbReference type="NCBI Taxonomy" id="544404"/>
    <lineage>
        <taxon>Bacteria</taxon>
        <taxon>Pseudomonadati</taxon>
        <taxon>Pseudomonadota</taxon>
        <taxon>Gammaproteobacteria</taxon>
        <taxon>Enterobacterales</taxon>
        <taxon>Enterobacteriaceae</taxon>
        <taxon>Escherichia</taxon>
    </lineage>
</organism>
<sequence>MLYLTKIRNAESEFTENEQKIADFLRANVSELKSVSSRKMAKQLGISQSSIVKFAQKLGAQGFTELRMALIGEYSASREKTNATAQHLHSSITSDDSLEVIARKLNREKELALEQTCALFDYARLQKIIEVISKAPFIQITGLGGSALVGCDLSFKLMKIGYRVACEADTHVQATVSQALKKGDVQIAISYSGSKKEIVLCAEAARKQGATVIAITSLADSPLRRLAHFTLDTVSGETEWRSSSMSTRTAQNSVTDLLFVGLVQLNDVESLKMIQRSSELTQRLK</sequence>
<reference key="1">
    <citation type="journal article" date="2009" name="Infect. Immun.">
        <title>Analysis of the genome of the Escherichia coli O157:H7 2006 spinach-associated outbreak isolate indicates candidate genes that may enhance virulence.</title>
        <authorList>
            <person name="Kulasekara B.R."/>
            <person name="Jacobs M."/>
            <person name="Zhou Y."/>
            <person name="Wu Z."/>
            <person name="Sims E."/>
            <person name="Saenphimmachak C."/>
            <person name="Rohmer L."/>
            <person name="Ritchie J.M."/>
            <person name="Radey M."/>
            <person name="McKevitt M."/>
            <person name="Freeman T.L."/>
            <person name="Hayden H."/>
            <person name="Haugen E."/>
            <person name="Gillett W."/>
            <person name="Fong C."/>
            <person name="Chang J."/>
            <person name="Beskhlebnaya V."/>
            <person name="Waldor M.K."/>
            <person name="Samadpour M."/>
            <person name="Whittam T.S."/>
            <person name="Kaul R."/>
            <person name="Brittnacher M."/>
            <person name="Miller S.I."/>
        </authorList>
    </citation>
    <scope>NUCLEOTIDE SEQUENCE [LARGE SCALE GENOMIC DNA]</scope>
    <source>
        <strain>TW14359 / EHEC</strain>
    </source>
</reference>